<keyword id="KW-0963">Cytoplasm</keyword>
<keyword id="KW-0271">Exosome</keyword>
<keyword id="KW-0694">RNA-binding</keyword>
<comment type="function">
    <text evidence="1">Non-catalytic component of the exosome, which is a complex involved in RNA degradation. Increases the RNA binding and the efficiency of RNA degradation. Confers strong poly(A) specificity to the exosome.</text>
</comment>
<comment type="subunit">
    <text evidence="1">Component of the archaeal exosome complex. Forms a trimer of Rrp4 and/or Csl4 subunits. The trimer associates with a hexameric ring-like arrangement composed of 3 Rrp41-Rrp42 heterodimers.</text>
</comment>
<comment type="subcellular location">
    <subcellularLocation>
        <location evidence="1">Cytoplasm</location>
    </subcellularLocation>
</comment>
<comment type="similarity">
    <text evidence="1">Belongs to the RRP4 family.</text>
</comment>
<evidence type="ECO:0000255" key="1">
    <source>
        <dbReference type="HAMAP-Rule" id="MF_00623"/>
    </source>
</evidence>
<gene>
    <name evidence="1" type="primary">rrp4</name>
    <name type="ordered locus">Mbar_A2505</name>
</gene>
<dbReference type="EMBL" id="CP000099">
    <property type="protein sequence ID" value="AAZ71418.1"/>
    <property type="molecule type" value="Genomic_DNA"/>
</dbReference>
<dbReference type="SMR" id="Q469M4"/>
<dbReference type="STRING" id="269797.Mbar_A2505"/>
<dbReference type="PaxDb" id="269797-Mbar_A2505"/>
<dbReference type="KEGG" id="mba:Mbar_A2505"/>
<dbReference type="eggNOG" id="arCOG00678">
    <property type="taxonomic scope" value="Archaea"/>
</dbReference>
<dbReference type="HOGENOM" id="CLU_071769_0_0_2"/>
<dbReference type="OrthoDB" id="35160at2157"/>
<dbReference type="GO" id="GO:0005737">
    <property type="term" value="C:cytoplasm"/>
    <property type="evidence" value="ECO:0007669"/>
    <property type="project" value="UniProtKB-SubCell"/>
</dbReference>
<dbReference type="GO" id="GO:0000178">
    <property type="term" value="C:exosome (RNase complex)"/>
    <property type="evidence" value="ECO:0007669"/>
    <property type="project" value="UniProtKB-KW"/>
</dbReference>
<dbReference type="GO" id="GO:0008143">
    <property type="term" value="F:poly(A) binding"/>
    <property type="evidence" value="ECO:0007669"/>
    <property type="project" value="InterPro"/>
</dbReference>
<dbReference type="GO" id="GO:0071034">
    <property type="term" value="P:CUT catabolic process"/>
    <property type="evidence" value="ECO:0007669"/>
    <property type="project" value="TreeGrafter"/>
</dbReference>
<dbReference type="GO" id="GO:0000467">
    <property type="term" value="P:exonucleolytic trimming to generate mature 3'-end of 5.8S rRNA from tricistronic rRNA transcript (SSU-rRNA, 5.8S rRNA, LSU-rRNA)"/>
    <property type="evidence" value="ECO:0007669"/>
    <property type="project" value="TreeGrafter"/>
</dbReference>
<dbReference type="GO" id="GO:0071051">
    <property type="term" value="P:poly(A)-dependent snoRNA 3'-end processing"/>
    <property type="evidence" value="ECO:0007669"/>
    <property type="project" value="TreeGrafter"/>
</dbReference>
<dbReference type="GO" id="GO:0006401">
    <property type="term" value="P:RNA catabolic process"/>
    <property type="evidence" value="ECO:0007669"/>
    <property type="project" value="UniProtKB-UniRule"/>
</dbReference>
<dbReference type="GO" id="GO:0034475">
    <property type="term" value="P:U4 snRNA 3'-end processing"/>
    <property type="evidence" value="ECO:0007669"/>
    <property type="project" value="TreeGrafter"/>
</dbReference>
<dbReference type="CDD" id="cd22524">
    <property type="entry name" value="KH-I_Rrp4_prokar"/>
    <property type="match status" value="1"/>
</dbReference>
<dbReference type="CDD" id="cd05789">
    <property type="entry name" value="S1_Rrp4"/>
    <property type="match status" value="1"/>
</dbReference>
<dbReference type="FunFam" id="2.40.50.100:FF:000082">
    <property type="entry name" value="Exosome complex component Rrp4"/>
    <property type="match status" value="1"/>
</dbReference>
<dbReference type="FunFam" id="3.30.1370.10:FF:000095">
    <property type="entry name" value="Exosome complex component Rrp4"/>
    <property type="match status" value="1"/>
</dbReference>
<dbReference type="FunFam" id="2.40.50.140:FF:000127">
    <property type="entry name" value="Exosome complex component RRP40"/>
    <property type="match status" value="1"/>
</dbReference>
<dbReference type="Gene3D" id="2.40.50.100">
    <property type="match status" value="1"/>
</dbReference>
<dbReference type="Gene3D" id="3.30.1370.10">
    <property type="entry name" value="K Homology domain, type 1"/>
    <property type="match status" value="1"/>
</dbReference>
<dbReference type="Gene3D" id="2.40.50.140">
    <property type="entry name" value="Nucleic acid-binding proteins"/>
    <property type="match status" value="1"/>
</dbReference>
<dbReference type="HAMAP" id="MF_00623">
    <property type="entry name" value="Exosome_Rrp4"/>
    <property type="match status" value="1"/>
</dbReference>
<dbReference type="InterPro" id="IPR026699">
    <property type="entry name" value="Exosome_RNA_bind1/RRP40/RRP4"/>
</dbReference>
<dbReference type="InterPro" id="IPR004087">
    <property type="entry name" value="KH_dom"/>
</dbReference>
<dbReference type="InterPro" id="IPR004088">
    <property type="entry name" value="KH_dom_type_1"/>
</dbReference>
<dbReference type="InterPro" id="IPR036612">
    <property type="entry name" value="KH_dom_type_1_sf"/>
</dbReference>
<dbReference type="InterPro" id="IPR012340">
    <property type="entry name" value="NA-bd_OB-fold"/>
</dbReference>
<dbReference type="InterPro" id="IPR023474">
    <property type="entry name" value="Rrp4"/>
</dbReference>
<dbReference type="InterPro" id="IPR054371">
    <property type="entry name" value="RRP4_N"/>
</dbReference>
<dbReference type="InterPro" id="IPR048565">
    <property type="entry name" value="RRP4_S1"/>
</dbReference>
<dbReference type="InterPro" id="IPR003029">
    <property type="entry name" value="S1_domain"/>
</dbReference>
<dbReference type="NCBIfam" id="NF003181">
    <property type="entry name" value="PRK04163.1-1"/>
    <property type="match status" value="1"/>
</dbReference>
<dbReference type="PANTHER" id="PTHR21321:SF4">
    <property type="entry name" value="EXOSOME COMPLEX COMPONENT RRP4"/>
    <property type="match status" value="1"/>
</dbReference>
<dbReference type="PANTHER" id="PTHR21321">
    <property type="entry name" value="PNAS-3 RELATED"/>
    <property type="match status" value="1"/>
</dbReference>
<dbReference type="Pfam" id="PF22625">
    <property type="entry name" value="ECR1_N_2"/>
    <property type="match status" value="1"/>
</dbReference>
<dbReference type="Pfam" id="PF15985">
    <property type="entry name" value="KH_6"/>
    <property type="match status" value="1"/>
</dbReference>
<dbReference type="Pfam" id="PF00575">
    <property type="entry name" value="S1"/>
    <property type="match status" value="1"/>
</dbReference>
<dbReference type="SMART" id="SM00322">
    <property type="entry name" value="KH"/>
    <property type="match status" value="1"/>
</dbReference>
<dbReference type="SMART" id="SM00316">
    <property type="entry name" value="S1"/>
    <property type="match status" value="1"/>
</dbReference>
<dbReference type="SUPFAM" id="SSF54791">
    <property type="entry name" value="Eukaryotic type KH-domain (KH-domain type I)"/>
    <property type="match status" value="1"/>
</dbReference>
<dbReference type="SUPFAM" id="SSF50249">
    <property type="entry name" value="Nucleic acid-binding proteins"/>
    <property type="match status" value="1"/>
</dbReference>
<dbReference type="SUPFAM" id="SSF110324">
    <property type="entry name" value="Ribosomal L27 protein-like"/>
    <property type="match status" value="1"/>
</dbReference>
<dbReference type="PROSITE" id="PS50084">
    <property type="entry name" value="KH_TYPE_1"/>
    <property type="match status" value="1"/>
</dbReference>
<dbReference type="PROSITE" id="PS50126">
    <property type="entry name" value="S1"/>
    <property type="match status" value="1"/>
</dbReference>
<accession>Q469M4</accession>
<feature type="chain" id="PRO_1000061381" description="Exosome complex component Rrp4">
    <location>
        <begin position="1"/>
        <end position="260"/>
    </location>
</feature>
<feature type="domain" description="S1 motif" evidence="1">
    <location>
        <begin position="59"/>
        <end position="128"/>
    </location>
</feature>
<feature type="domain" description="KH" evidence="1">
    <location>
        <begin position="136"/>
        <end position="194"/>
    </location>
</feature>
<sequence>MDKKIVIPGDLISENSKKAGYGTYVKNDKIYSLFCGIENLKEDKVGVIPLAGVYIPSANDVVIGIVIVVTPSNWIMDIASPYDGLFHVSEYPRRIESREMHEVLNVGDSIILRVKDVDNSMKVELALRDSSFHKLKTGQIVEVEPVKVPRVIGHGGSMISMLKKETNCSIFVGQNGRIWIDGKDDDVELLSKALRKIEAEAQRSGLTDRIYNFLKNERSKQKESKPAKFFKSGKKEVKLPKEDHSEEIYRKIDVLLDPNN</sequence>
<organism>
    <name type="scientific">Methanosarcina barkeri (strain Fusaro / DSM 804)</name>
    <dbReference type="NCBI Taxonomy" id="269797"/>
    <lineage>
        <taxon>Archaea</taxon>
        <taxon>Methanobacteriati</taxon>
        <taxon>Methanobacteriota</taxon>
        <taxon>Stenosarchaea group</taxon>
        <taxon>Methanomicrobia</taxon>
        <taxon>Methanosarcinales</taxon>
        <taxon>Methanosarcinaceae</taxon>
        <taxon>Methanosarcina</taxon>
    </lineage>
</organism>
<proteinExistence type="inferred from homology"/>
<reference key="1">
    <citation type="journal article" date="2006" name="J. Bacteriol.">
        <title>The Methanosarcina barkeri genome: comparative analysis with Methanosarcina acetivorans and Methanosarcina mazei reveals extensive rearrangement within methanosarcinal genomes.</title>
        <authorList>
            <person name="Maeder D.L."/>
            <person name="Anderson I."/>
            <person name="Brettin T.S."/>
            <person name="Bruce D.C."/>
            <person name="Gilna P."/>
            <person name="Han C.S."/>
            <person name="Lapidus A."/>
            <person name="Metcalf W.W."/>
            <person name="Saunders E."/>
            <person name="Tapia R."/>
            <person name="Sowers K.R."/>
        </authorList>
    </citation>
    <scope>NUCLEOTIDE SEQUENCE [LARGE SCALE GENOMIC DNA]</scope>
    <source>
        <strain>Fusaro / DSM 804</strain>
    </source>
</reference>
<protein>
    <recommendedName>
        <fullName evidence="1">Exosome complex component Rrp4</fullName>
    </recommendedName>
</protein>
<name>RRP4_METBF</name>